<gene>
    <name evidence="1" type="primary">hisS</name>
    <name type="ordered locus">NSE_0781</name>
</gene>
<protein>
    <recommendedName>
        <fullName evidence="1">Histidine--tRNA ligase</fullName>
        <ecNumber evidence="1">6.1.1.21</ecNumber>
    </recommendedName>
    <alternativeName>
        <fullName evidence="1">Histidyl-tRNA synthetase</fullName>
        <shortName evidence="1">HisRS</shortName>
    </alternativeName>
</protein>
<sequence>MSIKINNVKGTRDLFGEQLEKMRLIEQVAKNLSIRYLFTELETPIIEHTELFIRNLGETSDVVNKEIYSFQDKSGHNICLRPEFTAAVTRAFVENFQHIQSPVRLFSFGPLFRYERPQKGRYRQFHQVNFEWIGAKHYLWAVEAIVLAKSFLKEIGIRCEIRVNSLGCSRTREEYKLALINYFQQYKEHLSADSLLRLKKNPLRILDSKDPSEKEIVVGAPRILDYHTDDALKEFESICDILKLLDIEFSVDHRLVRGLDYYSGLIFEFTSPDLGAQDALLGGGAYEQLSENLGGKKVQSIGFAAGIERLIDIMPVLAPTSDKIVSIVPIGEIAEREALKLLFYLRSEGLCADMCYGLSVKSRMKRAERSTVTVILGEEEFSRGESTVRIMETGQQMTVAHEKLLSTLRELLC</sequence>
<dbReference type="EC" id="6.1.1.21" evidence="1"/>
<dbReference type="EMBL" id="CP000237">
    <property type="protein sequence ID" value="ABD45741.1"/>
    <property type="molecule type" value="Genomic_DNA"/>
</dbReference>
<dbReference type="RefSeq" id="WP_011452162.1">
    <property type="nucleotide sequence ID" value="NC_007798.1"/>
</dbReference>
<dbReference type="SMR" id="Q2GCZ0"/>
<dbReference type="STRING" id="222891.NSE_0781"/>
<dbReference type="KEGG" id="nse:NSE_0781"/>
<dbReference type="eggNOG" id="COG0124">
    <property type="taxonomic scope" value="Bacteria"/>
</dbReference>
<dbReference type="HOGENOM" id="CLU_025113_1_0_5"/>
<dbReference type="OrthoDB" id="9800814at2"/>
<dbReference type="Proteomes" id="UP000001942">
    <property type="component" value="Chromosome"/>
</dbReference>
<dbReference type="GO" id="GO:0005737">
    <property type="term" value="C:cytoplasm"/>
    <property type="evidence" value="ECO:0007669"/>
    <property type="project" value="UniProtKB-SubCell"/>
</dbReference>
<dbReference type="GO" id="GO:0005524">
    <property type="term" value="F:ATP binding"/>
    <property type="evidence" value="ECO:0007669"/>
    <property type="project" value="UniProtKB-UniRule"/>
</dbReference>
<dbReference type="GO" id="GO:0004821">
    <property type="term" value="F:histidine-tRNA ligase activity"/>
    <property type="evidence" value="ECO:0007669"/>
    <property type="project" value="UniProtKB-UniRule"/>
</dbReference>
<dbReference type="GO" id="GO:0006427">
    <property type="term" value="P:histidyl-tRNA aminoacylation"/>
    <property type="evidence" value="ECO:0007669"/>
    <property type="project" value="UniProtKB-UniRule"/>
</dbReference>
<dbReference type="CDD" id="cd00773">
    <property type="entry name" value="HisRS-like_core"/>
    <property type="match status" value="1"/>
</dbReference>
<dbReference type="Gene3D" id="3.40.50.800">
    <property type="entry name" value="Anticodon-binding domain"/>
    <property type="match status" value="1"/>
</dbReference>
<dbReference type="Gene3D" id="3.30.930.10">
    <property type="entry name" value="Bira Bifunctional Protein, Domain 2"/>
    <property type="match status" value="1"/>
</dbReference>
<dbReference type="HAMAP" id="MF_00127">
    <property type="entry name" value="His_tRNA_synth"/>
    <property type="match status" value="1"/>
</dbReference>
<dbReference type="InterPro" id="IPR006195">
    <property type="entry name" value="aa-tRNA-synth_II"/>
</dbReference>
<dbReference type="InterPro" id="IPR045864">
    <property type="entry name" value="aa-tRNA-synth_II/BPL/LPL"/>
</dbReference>
<dbReference type="InterPro" id="IPR004154">
    <property type="entry name" value="Anticodon-bd"/>
</dbReference>
<dbReference type="InterPro" id="IPR036621">
    <property type="entry name" value="Anticodon-bd_dom_sf"/>
</dbReference>
<dbReference type="InterPro" id="IPR015807">
    <property type="entry name" value="His-tRNA-ligase"/>
</dbReference>
<dbReference type="InterPro" id="IPR041715">
    <property type="entry name" value="HisRS-like_core"/>
</dbReference>
<dbReference type="InterPro" id="IPR004516">
    <property type="entry name" value="HisRS/HisZ"/>
</dbReference>
<dbReference type="NCBIfam" id="TIGR00442">
    <property type="entry name" value="hisS"/>
    <property type="match status" value="1"/>
</dbReference>
<dbReference type="PANTHER" id="PTHR43707:SF1">
    <property type="entry name" value="HISTIDINE--TRNA LIGASE, MITOCHONDRIAL-RELATED"/>
    <property type="match status" value="1"/>
</dbReference>
<dbReference type="PANTHER" id="PTHR43707">
    <property type="entry name" value="HISTIDYL-TRNA SYNTHETASE"/>
    <property type="match status" value="1"/>
</dbReference>
<dbReference type="Pfam" id="PF03129">
    <property type="entry name" value="HGTP_anticodon"/>
    <property type="match status" value="1"/>
</dbReference>
<dbReference type="Pfam" id="PF13393">
    <property type="entry name" value="tRNA-synt_His"/>
    <property type="match status" value="1"/>
</dbReference>
<dbReference type="PIRSF" id="PIRSF001549">
    <property type="entry name" value="His-tRNA_synth"/>
    <property type="match status" value="1"/>
</dbReference>
<dbReference type="SUPFAM" id="SSF52954">
    <property type="entry name" value="Class II aaRS ABD-related"/>
    <property type="match status" value="1"/>
</dbReference>
<dbReference type="SUPFAM" id="SSF55681">
    <property type="entry name" value="Class II aaRS and biotin synthetases"/>
    <property type="match status" value="1"/>
</dbReference>
<dbReference type="PROSITE" id="PS50862">
    <property type="entry name" value="AA_TRNA_LIGASE_II"/>
    <property type="match status" value="1"/>
</dbReference>
<keyword id="KW-0030">Aminoacyl-tRNA synthetase</keyword>
<keyword id="KW-0067">ATP-binding</keyword>
<keyword id="KW-0963">Cytoplasm</keyword>
<keyword id="KW-0436">Ligase</keyword>
<keyword id="KW-0547">Nucleotide-binding</keyword>
<keyword id="KW-0648">Protein biosynthesis</keyword>
<evidence type="ECO:0000255" key="1">
    <source>
        <dbReference type="HAMAP-Rule" id="MF_00127"/>
    </source>
</evidence>
<proteinExistence type="inferred from homology"/>
<comment type="catalytic activity">
    <reaction evidence="1">
        <text>tRNA(His) + L-histidine + ATP = L-histidyl-tRNA(His) + AMP + diphosphate + H(+)</text>
        <dbReference type="Rhea" id="RHEA:17313"/>
        <dbReference type="Rhea" id="RHEA-COMP:9665"/>
        <dbReference type="Rhea" id="RHEA-COMP:9689"/>
        <dbReference type="ChEBI" id="CHEBI:15378"/>
        <dbReference type="ChEBI" id="CHEBI:30616"/>
        <dbReference type="ChEBI" id="CHEBI:33019"/>
        <dbReference type="ChEBI" id="CHEBI:57595"/>
        <dbReference type="ChEBI" id="CHEBI:78442"/>
        <dbReference type="ChEBI" id="CHEBI:78527"/>
        <dbReference type="ChEBI" id="CHEBI:456215"/>
        <dbReference type="EC" id="6.1.1.21"/>
    </reaction>
</comment>
<comment type="subunit">
    <text evidence="1">Homodimer.</text>
</comment>
<comment type="subcellular location">
    <subcellularLocation>
        <location evidence="1">Cytoplasm</location>
    </subcellularLocation>
</comment>
<comment type="similarity">
    <text evidence="1">Belongs to the class-II aminoacyl-tRNA synthetase family.</text>
</comment>
<name>SYH_NEOSM</name>
<feature type="chain" id="PRO_1000016402" description="Histidine--tRNA ligase">
    <location>
        <begin position="1"/>
        <end position="413"/>
    </location>
</feature>
<organism>
    <name type="scientific">Neorickettsia sennetsu (strain ATCC VR-367 / Miyayama)</name>
    <name type="common">Ehrlichia sennetsu</name>
    <dbReference type="NCBI Taxonomy" id="222891"/>
    <lineage>
        <taxon>Bacteria</taxon>
        <taxon>Pseudomonadati</taxon>
        <taxon>Pseudomonadota</taxon>
        <taxon>Alphaproteobacteria</taxon>
        <taxon>Rickettsiales</taxon>
        <taxon>Anaplasmataceae</taxon>
        <taxon>Neorickettsia</taxon>
    </lineage>
</organism>
<accession>Q2GCZ0</accession>
<reference key="1">
    <citation type="journal article" date="2006" name="PLoS Genet.">
        <title>Comparative genomics of emerging human ehrlichiosis agents.</title>
        <authorList>
            <person name="Dunning Hotopp J.C."/>
            <person name="Lin M."/>
            <person name="Madupu R."/>
            <person name="Crabtree J."/>
            <person name="Angiuoli S.V."/>
            <person name="Eisen J.A."/>
            <person name="Seshadri R."/>
            <person name="Ren Q."/>
            <person name="Wu M."/>
            <person name="Utterback T.R."/>
            <person name="Smith S."/>
            <person name="Lewis M."/>
            <person name="Khouri H."/>
            <person name="Zhang C."/>
            <person name="Niu H."/>
            <person name="Lin Q."/>
            <person name="Ohashi N."/>
            <person name="Zhi N."/>
            <person name="Nelson W.C."/>
            <person name="Brinkac L.M."/>
            <person name="Dodson R.J."/>
            <person name="Rosovitz M.J."/>
            <person name="Sundaram J.P."/>
            <person name="Daugherty S.C."/>
            <person name="Davidsen T."/>
            <person name="Durkin A.S."/>
            <person name="Gwinn M.L."/>
            <person name="Haft D.H."/>
            <person name="Selengut J.D."/>
            <person name="Sullivan S.A."/>
            <person name="Zafar N."/>
            <person name="Zhou L."/>
            <person name="Benahmed F."/>
            <person name="Forberger H."/>
            <person name="Halpin R."/>
            <person name="Mulligan S."/>
            <person name="Robinson J."/>
            <person name="White O."/>
            <person name="Rikihisa Y."/>
            <person name="Tettelin H."/>
        </authorList>
    </citation>
    <scope>NUCLEOTIDE SEQUENCE [LARGE SCALE GENOMIC DNA]</scope>
    <source>
        <strain>ATCC VR-367 / Miyayama</strain>
    </source>
</reference>